<comment type="function">
    <text evidence="1">NDH-1 shuttles electrons from NADH, via FMN and iron-sulfur (Fe-S) centers, to quinones in the respiratory chain. The immediate electron acceptor for the enzyme in this species is believed to be ubiquinone. Couples the redox reaction to proton translocation (for every two electrons transferred, four hydrogen ions are translocated across the cytoplasmic membrane), and thus conserves the redox energy in a proton gradient.</text>
</comment>
<comment type="catalytic activity">
    <reaction evidence="1">
        <text>a quinone + NADH + 5 H(+)(in) = a quinol + NAD(+) + 4 H(+)(out)</text>
        <dbReference type="Rhea" id="RHEA:57888"/>
        <dbReference type="ChEBI" id="CHEBI:15378"/>
        <dbReference type="ChEBI" id="CHEBI:24646"/>
        <dbReference type="ChEBI" id="CHEBI:57540"/>
        <dbReference type="ChEBI" id="CHEBI:57945"/>
        <dbReference type="ChEBI" id="CHEBI:132124"/>
    </reaction>
</comment>
<comment type="subunit">
    <text evidence="1">NDH-1 is composed of 14 different subunits. Subunits NuoA, H, J, K, L, M, N constitute the membrane sector of the complex.</text>
</comment>
<comment type="subcellular location">
    <subcellularLocation>
        <location evidence="1">Cell inner membrane</location>
        <topology evidence="1">Multi-pass membrane protein</topology>
    </subcellularLocation>
</comment>
<comment type="similarity">
    <text evidence="1">Belongs to the complex I subunit 2 family.</text>
</comment>
<accession>C6XAK0</accession>
<gene>
    <name evidence="1" type="primary">nuoN</name>
    <name type="ordered locus">Msip34_0684</name>
</gene>
<name>NUON_METGS</name>
<organism>
    <name type="scientific">Methylovorus glucosotrophus (strain SIP3-4)</name>
    <dbReference type="NCBI Taxonomy" id="582744"/>
    <lineage>
        <taxon>Bacteria</taxon>
        <taxon>Pseudomonadati</taxon>
        <taxon>Pseudomonadota</taxon>
        <taxon>Betaproteobacteria</taxon>
        <taxon>Nitrosomonadales</taxon>
        <taxon>Methylophilaceae</taxon>
        <taxon>Methylovorus</taxon>
    </lineage>
</organism>
<reference key="1">
    <citation type="submission" date="2009-07" db="EMBL/GenBank/DDBJ databases">
        <title>Complete sequence of chromosome of Methylovorus sp. SIP3-4.</title>
        <authorList>
            <person name="Lucas S."/>
            <person name="Copeland A."/>
            <person name="Lapidus A."/>
            <person name="Glavina del Rio T."/>
            <person name="Tice H."/>
            <person name="Bruce D."/>
            <person name="Goodwin L."/>
            <person name="Pitluck S."/>
            <person name="Clum A."/>
            <person name="Larimer F."/>
            <person name="Land M."/>
            <person name="Hauser L."/>
            <person name="Kyrpides N."/>
            <person name="Mikhailova N."/>
            <person name="Kayluzhnaya M."/>
            <person name="Chistoserdova L."/>
        </authorList>
    </citation>
    <scope>NUCLEOTIDE SEQUENCE [LARGE SCALE GENOMIC DNA]</scope>
    <source>
        <strain>SIP3-4</strain>
    </source>
</reference>
<evidence type="ECO:0000255" key="1">
    <source>
        <dbReference type="HAMAP-Rule" id="MF_00445"/>
    </source>
</evidence>
<sequence>MNAIQSDLYAALPEIIILCMAMFVLLLDLFLKSHNRSLIYIFTQLGLAAAAVVTACTHNVSVVSYAFNGMFVDDPLSDVLKLMMYLTTSVMLVYTRQYVSLRDMFRGEYFALTLFALLGMMIMVSGQHFLTLYMGLELLSLCLYALVAMDRDNPRATEAAMKYFVLGALSSGMLLYGMSMLYGVTGTLDVAEVANALLQGAPDHAVLVLGVVFLIAGLGFKLGAVPFQMWVPDVYHGAPTAVTLFIGSVTKLAAFAFMIRLLIQGLYVLAIDWQGMLAIMAVLSILIGNITAIAQTNLKRMLAYSTISHVGYLLYGFMSAGTNGYVSAMFYIMAYVLMTLGGFGIMLLLSRKGFEADNLEDLKGLNQRSPWYAFLMLIIMFSMAGVPPTLGFYAKFAVLQAALQAGFVGLVIFAVVMAAIGGFYYLRVVKLMYFDEPLDNTPIKAPIDMKVLLSLNALLLLALGMFPQRLMDICAYAITHSFQ</sequence>
<proteinExistence type="inferred from homology"/>
<keyword id="KW-0997">Cell inner membrane</keyword>
<keyword id="KW-1003">Cell membrane</keyword>
<keyword id="KW-0472">Membrane</keyword>
<keyword id="KW-0520">NAD</keyword>
<keyword id="KW-0874">Quinone</keyword>
<keyword id="KW-1185">Reference proteome</keyword>
<keyword id="KW-1278">Translocase</keyword>
<keyword id="KW-0812">Transmembrane</keyword>
<keyword id="KW-1133">Transmembrane helix</keyword>
<keyword id="KW-0813">Transport</keyword>
<keyword id="KW-0830">Ubiquinone</keyword>
<feature type="chain" id="PRO_0000391180" description="NADH-quinone oxidoreductase subunit N">
    <location>
        <begin position="1"/>
        <end position="483"/>
    </location>
</feature>
<feature type="transmembrane region" description="Helical" evidence="1">
    <location>
        <begin position="11"/>
        <end position="31"/>
    </location>
</feature>
<feature type="transmembrane region" description="Helical" evidence="1">
    <location>
        <begin position="37"/>
        <end position="57"/>
    </location>
</feature>
<feature type="transmembrane region" description="Helical" evidence="1">
    <location>
        <begin position="82"/>
        <end position="100"/>
    </location>
</feature>
<feature type="transmembrane region" description="Helical" evidence="1">
    <location>
        <begin position="110"/>
        <end position="130"/>
    </location>
</feature>
<feature type="transmembrane region" description="Helical" evidence="1">
    <location>
        <begin position="164"/>
        <end position="184"/>
    </location>
</feature>
<feature type="transmembrane region" description="Helical" evidence="1">
    <location>
        <begin position="205"/>
        <end position="225"/>
    </location>
</feature>
<feature type="transmembrane region" description="Helical" evidence="1">
    <location>
        <begin position="239"/>
        <end position="259"/>
    </location>
</feature>
<feature type="transmembrane region" description="Helical" evidence="1">
    <location>
        <begin position="268"/>
        <end position="288"/>
    </location>
</feature>
<feature type="transmembrane region" description="Helical" evidence="1">
    <location>
        <begin position="301"/>
        <end position="321"/>
    </location>
</feature>
<feature type="transmembrane region" description="Helical" evidence="1">
    <location>
        <begin position="329"/>
        <end position="349"/>
    </location>
</feature>
<feature type="transmembrane region" description="Helical" evidence="1">
    <location>
        <begin position="372"/>
        <end position="392"/>
    </location>
</feature>
<feature type="transmembrane region" description="Helical" evidence="1">
    <location>
        <begin position="406"/>
        <end position="426"/>
    </location>
</feature>
<feature type="transmembrane region" description="Helical" evidence="1">
    <location>
        <begin position="446"/>
        <end position="466"/>
    </location>
</feature>
<protein>
    <recommendedName>
        <fullName evidence="1">NADH-quinone oxidoreductase subunit N</fullName>
        <ecNumber evidence="1">7.1.1.-</ecNumber>
    </recommendedName>
    <alternativeName>
        <fullName evidence="1">NADH dehydrogenase I subunit N</fullName>
    </alternativeName>
    <alternativeName>
        <fullName evidence="1">NDH-1 subunit N</fullName>
    </alternativeName>
</protein>
<dbReference type="EC" id="7.1.1.-" evidence="1"/>
<dbReference type="EMBL" id="CP001674">
    <property type="protein sequence ID" value="ACT49932.1"/>
    <property type="molecule type" value="Genomic_DNA"/>
</dbReference>
<dbReference type="RefSeq" id="WP_015829534.1">
    <property type="nucleotide sequence ID" value="NC_012969.1"/>
</dbReference>
<dbReference type="SMR" id="C6XAK0"/>
<dbReference type="STRING" id="582744.Msip34_0684"/>
<dbReference type="KEGG" id="mei:Msip34_0684"/>
<dbReference type="eggNOG" id="COG1007">
    <property type="taxonomic scope" value="Bacteria"/>
</dbReference>
<dbReference type="HOGENOM" id="CLU_007100_1_3_4"/>
<dbReference type="OrthoDB" id="9768329at2"/>
<dbReference type="Proteomes" id="UP000002743">
    <property type="component" value="Chromosome"/>
</dbReference>
<dbReference type="GO" id="GO:0005886">
    <property type="term" value="C:plasma membrane"/>
    <property type="evidence" value="ECO:0007669"/>
    <property type="project" value="UniProtKB-SubCell"/>
</dbReference>
<dbReference type="GO" id="GO:0008137">
    <property type="term" value="F:NADH dehydrogenase (ubiquinone) activity"/>
    <property type="evidence" value="ECO:0007669"/>
    <property type="project" value="InterPro"/>
</dbReference>
<dbReference type="GO" id="GO:0050136">
    <property type="term" value="F:NADH:ubiquinone reductase (non-electrogenic) activity"/>
    <property type="evidence" value="ECO:0007669"/>
    <property type="project" value="UniProtKB-UniRule"/>
</dbReference>
<dbReference type="GO" id="GO:0048038">
    <property type="term" value="F:quinone binding"/>
    <property type="evidence" value="ECO:0007669"/>
    <property type="project" value="UniProtKB-KW"/>
</dbReference>
<dbReference type="GO" id="GO:0042773">
    <property type="term" value="P:ATP synthesis coupled electron transport"/>
    <property type="evidence" value="ECO:0007669"/>
    <property type="project" value="InterPro"/>
</dbReference>
<dbReference type="HAMAP" id="MF_00445">
    <property type="entry name" value="NDH1_NuoN_1"/>
    <property type="match status" value="1"/>
</dbReference>
<dbReference type="InterPro" id="IPR010096">
    <property type="entry name" value="NADH-Q_OxRdtase_suN/2"/>
</dbReference>
<dbReference type="InterPro" id="IPR001750">
    <property type="entry name" value="ND/Mrp_TM"/>
</dbReference>
<dbReference type="NCBIfam" id="TIGR01770">
    <property type="entry name" value="NDH_I_N"/>
    <property type="match status" value="1"/>
</dbReference>
<dbReference type="NCBIfam" id="NF004442">
    <property type="entry name" value="PRK05777.1-5"/>
    <property type="match status" value="1"/>
</dbReference>
<dbReference type="PANTHER" id="PTHR22773">
    <property type="entry name" value="NADH DEHYDROGENASE"/>
    <property type="match status" value="1"/>
</dbReference>
<dbReference type="Pfam" id="PF00361">
    <property type="entry name" value="Proton_antipo_M"/>
    <property type="match status" value="1"/>
</dbReference>
<dbReference type="PRINTS" id="PR01434">
    <property type="entry name" value="NADHDHGNASE5"/>
</dbReference>